<keyword id="KW-0002">3D-structure</keyword>
<keyword id="KW-0067">ATP-binding</keyword>
<keyword id="KW-0456">Lyase</keyword>
<keyword id="KW-0520">NAD</keyword>
<keyword id="KW-0521">NADP</keyword>
<keyword id="KW-0547">Nucleotide-binding</keyword>
<keyword id="KW-1185">Reference proteome</keyword>
<dbReference type="EC" id="4.2.1.136" evidence="1"/>
<dbReference type="EMBL" id="AE016830">
    <property type="protein sequence ID" value="AAO81560.1"/>
    <property type="molecule type" value="Genomic_DNA"/>
</dbReference>
<dbReference type="RefSeq" id="NP_815490.1">
    <property type="nucleotide sequence ID" value="NC_004668.1"/>
</dbReference>
<dbReference type="RefSeq" id="WP_002365767.1">
    <property type="nucleotide sequence ID" value="NZ_KE136528.1"/>
</dbReference>
<dbReference type="PDB" id="2R3B">
    <property type="method" value="X-ray"/>
    <property type="resolution" value="1.80 A"/>
    <property type="chains" value="A/B=1-291"/>
</dbReference>
<dbReference type="PDB" id="2R3E">
    <property type="method" value="X-ray"/>
    <property type="resolution" value="1.95 A"/>
    <property type="chains" value="A=1-291"/>
</dbReference>
<dbReference type="PDBsum" id="2R3B"/>
<dbReference type="PDBsum" id="2R3E"/>
<dbReference type="SMR" id="Q833Y3"/>
<dbReference type="STRING" id="226185.EF_1790"/>
<dbReference type="DNASU" id="1200678"/>
<dbReference type="EnsemblBacteria" id="AAO81560">
    <property type="protein sequence ID" value="AAO81560"/>
    <property type="gene ID" value="EF_1790"/>
</dbReference>
<dbReference type="KEGG" id="efa:EF1790"/>
<dbReference type="PATRIC" id="fig|226185.45.peg.1726"/>
<dbReference type="eggNOG" id="COG0063">
    <property type="taxonomic scope" value="Bacteria"/>
</dbReference>
<dbReference type="HOGENOM" id="CLU_024853_2_1_9"/>
<dbReference type="EvolutionaryTrace" id="Q833Y3"/>
<dbReference type="Proteomes" id="UP000001415">
    <property type="component" value="Chromosome"/>
</dbReference>
<dbReference type="GO" id="GO:0052855">
    <property type="term" value="F:ADP-dependent NAD(P)H-hydrate dehydratase activity"/>
    <property type="evidence" value="ECO:0007669"/>
    <property type="project" value="UniProtKB-UniRule"/>
</dbReference>
<dbReference type="GO" id="GO:0005524">
    <property type="term" value="F:ATP binding"/>
    <property type="evidence" value="ECO:0007669"/>
    <property type="project" value="UniProtKB-KW"/>
</dbReference>
<dbReference type="GO" id="GO:0052856">
    <property type="term" value="F:NAD(P)HX epimerase activity"/>
    <property type="evidence" value="ECO:0007669"/>
    <property type="project" value="TreeGrafter"/>
</dbReference>
<dbReference type="GO" id="GO:0110051">
    <property type="term" value="P:metabolite repair"/>
    <property type="evidence" value="ECO:0007669"/>
    <property type="project" value="TreeGrafter"/>
</dbReference>
<dbReference type="GO" id="GO:0046496">
    <property type="term" value="P:nicotinamide nucleotide metabolic process"/>
    <property type="evidence" value="ECO:0007669"/>
    <property type="project" value="UniProtKB-UniRule"/>
</dbReference>
<dbReference type="CDD" id="cd01171">
    <property type="entry name" value="YXKO-related"/>
    <property type="match status" value="1"/>
</dbReference>
<dbReference type="Gene3D" id="3.40.1190.20">
    <property type="match status" value="1"/>
</dbReference>
<dbReference type="HAMAP" id="MF_01965">
    <property type="entry name" value="NADHX_dehydratase"/>
    <property type="match status" value="1"/>
</dbReference>
<dbReference type="InterPro" id="IPR017953">
    <property type="entry name" value="Carbohydrate_kinase_pred_CS"/>
</dbReference>
<dbReference type="InterPro" id="IPR000631">
    <property type="entry name" value="CARKD"/>
</dbReference>
<dbReference type="InterPro" id="IPR029056">
    <property type="entry name" value="Ribokinase-like"/>
</dbReference>
<dbReference type="NCBIfam" id="TIGR00196">
    <property type="entry name" value="yjeF_cterm"/>
    <property type="match status" value="1"/>
</dbReference>
<dbReference type="PANTHER" id="PTHR12592:SF0">
    <property type="entry name" value="ATP-DEPENDENT (S)-NAD(P)H-HYDRATE DEHYDRATASE"/>
    <property type="match status" value="1"/>
</dbReference>
<dbReference type="PANTHER" id="PTHR12592">
    <property type="entry name" value="ATP-DEPENDENT (S)-NAD(P)H-HYDRATE DEHYDRATASE FAMILY MEMBER"/>
    <property type="match status" value="1"/>
</dbReference>
<dbReference type="Pfam" id="PF01256">
    <property type="entry name" value="Carb_kinase"/>
    <property type="match status" value="1"/>
</dbReference>
<dbReference type="SUPFAM" id="SSF53613">
    <property type="entry name" value="Ribokinase-like"/>
    <property type="match status" value="1"/>
</dbReference>
<dbReference type="PROSITE" id="PS01049">
    <property type="entry name" value="YJEF_C_1"/>
    <property type="match status" value="1"/>
</dbReference>
<dbReference type="PROSITE" id="PS01050">
    <property type="entry name" value="YJEF_C_2"/>
    <property type="match status" value="1"/>
</dbReference>
<dbReference type="PROSITE" id="PS51383">
    <property type="entry name" value="YJEF_C_3"/>
    <property type="match status" value="1"/>
</dbReference>
<reference key="1">
    <citation type="journal article" date="2003" name="Science">
        <title>Role of mobile DNA in the evolution of vancomycin-resistant Enterococcus faecalis.</title>
        <authorList>
            <person name="Paulsen I.T."/>
            <person name="Banerjei L."/>
            <person name="Myers G.S.A."/>
            <person name="Nelson K.E."/>
            <person name="Seshadri R."/>
            <person name="Read T.D."/>
            <person name="Fouts D.E."/>
            <person name="Eisen J.A."/>
            <person name="Gill S.R."/>
            <person name="Heidelberg J.F."/>
            <person name="Tettelin H."/>
            <person name="Dodson R.J."/>
            <person name="Umayam L.A."/>
            <person name="Brinkac L.M."/>
            <person name="Beanan M.J."/>
            <person name="Daugherty S.C."/>
            <person name="DeBoy R.T."/>
            <person name="Durkin S.A."/>
            <person name="Kolonay J.F."/>
            <person name="Madupu R."/>
            <person name="Nelson W.C."/>
            <person name="Vamathevan J.J."/>
            <person name="Tran B."/>
            <person name="Upton J."/>
            <person name="Hansen T."/>
            <person name="Shetty J."/>
            <person name="Khouri H.M."/>
            <person name="Utterback T.R."/>
            <person name="Radune D."/>
            <person name="Ketchum K.A."/>
            <person name="Dougherty B.A."/>
            <person name="Fraser C.M."/>
        </authorList>
    </citation>
    <scope>NUCLEOTIDE SEQUENCE [LARGE SCALE GENOMIC DNA]</scope>
    <source>
        <strain>ATCC 700802 / V583</strain>
    </source>
</reference>
<reference key="2">
    <citation type="submission" date="2007-08" db="PDB data bank">
        <title>Crystal structure of a putative kinase in the ribokinase-like superfamily from Enterococcus faecalis V583 (NP_815490.1) at 1.95 A resolution.</title>
        <authorList>
            <consortium name="Joint Center for Structural Genomics (JCSG)"/>
        </authorList>
    </citation>
    <scope>X-RAY CRYSTALLOGRAPHY (1.95 ANGSTROMS)</scope>
    <source>
        <strain>ATCC 700802 / V583</strain>
    </source>
</reference>
<reference key="3">
    <citation type="submission" date="2007-08" db="PDB data bank">
        <title>Crystal structure of a putative kinase in the ribokinase-like superfamily from Enterococcus faecalis V583 (NP_815490.1) at 1.80 A resolution.</title>
        <authorList>
            <consortium name="Joint Center for Structural Genomics (JCSG)"/>
        </authorList>
    </citation>
    <scope>X-RAY CRYSTALLOGRAPHY (1.80 ANGSTROMS)</scope>
    <source>
        <strain>ATCC 700802 / V583</strain>
    </source>
</reference>
<protein>
    <recommendedName>
        <fullName evidence="1">ADP-dependent (S)-NAD(P)H-hydrate dehydratase</fullName>
        <ecNumber evidence="1">4.2.1.136</ecNumber>
    </recommendedName>
    <alternativeName>
        <fullName evidence="1">ADP-dependent NAD(P)HX dehydratase</fullName>
    </alternativeName>
</protein>
<sequence>MRYLSKDILEEVITQRPSDSYKSNFGRVVLIGGNRQYGGAIIMSTEACINSGAGLTTVITDVKNHGPLHARCPEAMVVGFEETVLLTNVVEQADVILIGPGLGLDATAQQILKMVLAQHQKQQWLIIDGSAITLFSQGNFSLTYPEKVVFTPHQMEWQRLSHLPIEQQTLANNQRQQAKLGSTIVLKSHRTTIFHAGEPFQNTGGNPGMATGGTGDTLAGIIAGFLAQFKPTIETIAGAVYLHSLIGDDLAKTDYVVLPTKISQALPTYMKKYAQPHTAPDSELLEQKRSR</sequence>
<gene>
    <name evidence="1" type="primary">nnrD</name>
    <name type="ordered locus">EF_1790</name>
</gene>
<organism>
    <name type="scientific">Enterococcus faecalis (strain ATCC 700802 / V583)</name>
    <dbReference type="NCBI Taxonomy" id="226185"/>
    <lineage>
        <taxon>Bacteria</taxon>
        <taxon>Bacillati</taxon>
        <taxon>Bacillota</taxon>
        <taxon>Bacilli</taxon>
        <taxon>Lactobacillales</taxon>
        <taxon>Enterococcaceae</taxon>
        <taxon>Enterococcus</taxon>
    </lineage>
</organism>
<name>NNRD_ENTFA</name>
<proteinExistence type="evidence at protein level"/>
<comment type="function">
    <text evidence="1">Catalyzes the dehydration of the S-form of NAD(P)HX at the expense of ADP, which is converted to AMP. Together with NAD(P)HX epimerase, which catalyzes the epimerization of the S- and R-forms, the enzyme allows the repair of both epimers of NAD(P)HX, a damaged form of NAD(P)H that is a result of enzymatic or heat-dependent hydration.</text>
</comment>
<comment type="catalytic activity">
    <reaction evidence="1">
        <text>(6S)-NADHX + ADP = AMP + phosphate + NADH + H(+)</text>
        <dbReference type="Rhea" id="RHEA:32223"/>
        <dbReference type="ChEBI" id="CHEBI:15378"/>
        <dbReference type="ChEBI" id="CHEBI:43474"/>
        <dbReference type="ChEBI" id="CHEBI:57945"/>
        <dbReference type="ChEBI" id="CHEBI:64074"/>
        <dbReference type="ChEBI" id="CHEBI:456215"/>
        <dbReference type="ChEBI" id="CHEBI:456216"/>
        <dbReference type="EC" id="4.2.1.136"/>
    </reaction>
</comment>
<comment type="catalytic activity">
    <reaction evidence="1">
        <text>(6S)-NADPHX + ADP = AMP + phosphate + NADPH + H(+)</text>
        <dbReference type="Rhea" id="RHEA:32235"/>
        <dbReference type="ChEBI" id="CHEBI:15378"/>
        <dbReference type="ChEBI" id="CHEBI:43474"/>
        <dbReference type="ChEBI" id="CHEBI:57783"/>
        <dbReference type="ChEBI" id="CHEBI:64076"/>
        <dbReference type="ChEBI" id="CHEBI:456215"/>
        <dbReference type="ChEBI" id="CHEBI:456216"/>
        <dbReference type="EC" id="4.2.1.136"/>
    </reaction>
</comment>
<comment type="cofactor">
    <cofactor evidence="1">
        <name>Mg(2+)</name>
        <dbReference type="ChEBI" id="CHEBI:18420"/>
    </cofactor>
</comment>
<comment type="subunit">
    <text evidence="1">Homotetramer.</text>
</comment>
<comment type="similarity">
    <text evidence="1">Belongs to the NnrD/CARKD family.</text>
</comment>
<evidence type="ECO:0000255" key="1">
    <source>
        <dbReference type="HAMAP-Rule" id="MF_01965"/>
    </source>
</evidence>
<evidence type="ECO:0007829" key="2">
    <source>
        <dbReference type="PDB" id="2R3B"/>
    </source>
</evidence>
<feature type="chain" id="PRO_0000416141" description="ADP-dependent (S)-NAD(P)H-hydrate dehydratase">
    <location>
        <begin position="1"/>
        <end position="291"/>
    </location>
</feature>
<feature type="domain" description="YjeF C-terminal" evidence="1">
    <location>
        <begin position="5"/>
        <end position="273"/>
    </location>
</feature>
<feature type="binding site" evidence="1">
    <location>
        <position position="40"/>
    </location>
    <ligand>
        <name>(6S)-NADPHX</name>
        <dbReference type="ChEBI" id="CHEBI:64076"/>
    </ligand>
</feature>
<feature type="binding site" evidence="1">
    <location>
        <position position="103"/>
    </location>
    <ligand>
        <name>(6S)-NADPHX</name>
        <dbReference type="ChEBI" id="CHEBI:64076"/>
    </ligand>
</feature>
<feature type="binding site" evidence="1">
    <location>
        <position position="153"/>
    </location>
    <ligand>
        <name>(6S)-NADPHX</name>
        <dbReference type="ChEBI" id="CHEBI:64076"/>
    </ligand>
</feature>
<feature type="binding site" evidence="1">
    <location>
        <position position="215"/>
    </location>
    <ligand>
        <name>AMP</name>
        <dbReference type="ChEBI" id="CHEBI:456215"/>
    </ligand>
</feature>
<feature type="binding site" evidence="1">
    <location>
        <position position="216"/>
    </location>
    <ligand>
        <name>(6S)-NADPHX</name>
        <dbReference type="ChEBI" id="CHEBI:64076"/>
    </ligand>
</feature>
<feature type="helix" evidence="2">
    <location>
        <begin position="6"/>
        <end position="12"/>
    </location>
</feature>
<feature type="helix" evidence="2">
    <location>
        <begin position="22"/>
        <end position="25"/>
    </location>
</feature>
<feature type="strand" evidence="2">
    <location>
        <begin position="27"/>
        <end position="31"/>
    </location>
</feature>
<feature type="strand" evidence="2">
    <location>
        <begin position="35"/>
        <end position="37"/>
    </location>
</feature>
<feature type="helix" evidence="2">
    <location>
        <begin position="38"/>
        <end position="51"/>
    </location>
</feature>
<feature type="strand" evidence="2">
    <location>
        <begin position="54"/>
        <end position="59"/>
    </location>
</feature>
<feature type="helix" evidence="2">
    <location>
        <begin position="62"/>
        <end position="64"/>
    </location>
</feature>
<feature type="helix" evidence="2">
    <location>
        <begin position="65"/>
        <end position="71"/>
    </location>
</feature>
<feature type="strand" evidence="2">
    <location>
        <begin position="76"/>
        <end position="78"/>
    </location>
</feature>
<feature type="helix" evidence="2">
    <location>
        <begin position="83"/>
        <end position="92"/>
    </location>
</feature>
<feature type="strand" evidence="2">
    <location>
        <begin position="94"/>
        <end position="98"/>
    </location>
</feature>
<feature type="helix" evidence="2">
    <location>
        <begin position="106"/>
        <end position="118"/>
    </location>
</feature>
<feature type="strand" evidence="2">
    <location>
        <begin position="124"/>
        <end position="128"/>
    </location>
</feature>
<feature type="helix" evidence="2">
    <location>
        <begin position="130"/>
        <end position="137"/>
    </location>
</feature>
<feature type="helix" evidence="2">
    <location>
        <begin position="145"/>
        <end position="147"/>
    </location>
</feature>
<feature type="strand" evidence="2">
    <location>
        <begin position="148"/>
        <end position="151"/>
    </location>
</feature>
<feature type="helix" evidence="2">
    <location>
        <begin position="154"/>
        <end position="161"/>
    </location>
</feature>
<feature type="helix" evidence="2">
    <location>
        <begin position="165"/>
        <end position="167"/>
    </location>
</feature>
<feature type="helix" evidence="2">
    <location>
        <begin position="170"/>
        <end position="180"/>
    </location>
</feature>
<feature type="strand" evidence="2">
    <location>
        <begin position="182"/>
        <end position="186"/>
    </location>
</feature>
<feature type="strand" evidence="2">
    <location>
        <begin position="192"/>
        <end position="194"/>
    </location>
</feature>
<feature type="strand" evidence="2">
    <location>
        <begin position="196"/>
        <end position="198"/>
    </location>
</feature>
<feature type="helix" evidence="2">
    <location>
        <begin position="207"/>
        <end position="209"/>
    </location>
</feature>
<feature type="helix" evidence="2">
    <location>
        <begin position="214"/>
        <end position="228"/>
    </location>
</feature>
<feature type="helix" evidence="2">
    <location>
        <begin position="233"/>
        <end position="250"/>
    </location>
</feature>
<feature type="turn" evidence="2">
    <location>
        <begin position="251"/>
        <end position="253"/>
    </location>
</feature>
<feature type="helix" evidence="2">
    <location>
        <begin position="259"/>
        <end position="273"/>
    </location>
</feature>
<accession>Q833Y3</accession>